<accession>G5ED68</accession>
<accession>Q69Z15</accession>
<feature type="chain" id="PRO_0000436176" description="Phosphatidylinositol-3,5-bisphosphate 3-phosphatase MTMR6" evidence="10">
    <location>
        <begin position="1"/>
        <end position="676"/>
    </location>
</feature>
<feature type="domain" description="Myotubularin phosphatase" evidence="4">
    <location>
        <begin position="125"/>
        <end position="501"/>
    </location>
</feature>
<feature type="zinc finger region" description="FYVE-type" evidence="3">
    <location>
        <begin position="618"/>
        <end position="675"/>
    </location>
</feature>
<feature type="active site" description="Phosphocysteine intermediate" evidence="5">
    <location>
        <position position="335"/>
    </location>
</feature>
<feature type="binding site" evidence="1">
    <location>
        <begin position="249"/>
        <end position="252"/>
    </location>
    <ligand>
        <name>substrate</name>
    </ligand>
</feature>
<feature type="binding site" evidence="1">
    <location>
        <position position="249"/>
    </location>
    <ligand>
        <name>a 1,2-diacyl-sn-glycero-3-phospho-(1D-myo-inositol-3,5-bisphosphate)</name>
        <dbReference type="ChEBI" id="CHEBI:57923"/>
    </ligand>
</feature>
<feature type="binding site" evidence="1">
    <location>
        <position position="249"/>
    </location>
    <ligand>
        <name>a 1,2-diacyl-sn-glycero-3-phospho-(1D-myo-inositol-3-phosphate)</name>
        <dbReference type="ChEBI" id="CHEBI:58088"/>
    </ligand>
</feature>
<feature type="binding site" evidence="1">
    <location>
        <begin position="274"/>
        <end position="275"/>
    </location>
    <ligand>
        <name>substrate</name>
    </ligand>
</feature>
<feature type="binding site" evidence="1">
    <location>
        <position position="274"/>
    </location>
    <ligand>
        <name>a 1,2-diacyl-sn-glycero-3-phospho-(1D-myo-inositol-3,5-bisphosphate)</name>
        <dbReference type="ChEBI" id="CHEBI:57923"/>
    </ligand>
</feature>
<feature type="binding site" evidence="1">
    <location>
        <position position="274"/>
    </location>
    <ligand>
        <name>a 1,2-diacyl-sn-glycero-3-phospho-(1D-myo-inositol-3-phosphate)</name>
        <dbReference type="ChEBI" id="CHEBI:58088"/>
    </ligand>
</feature>
<feature type="binding site" evidence="1">
    <location>
        <position position="275"/>
    </location>
    <ligand>
        <name>a 1,2-diacyl-sn-glycero-3-phospho-(1D-myo-inositol-3,5-bisphosphate)</name>
        <dbReference type="ChEBI" id="CHEBI:57923"/>
    </ligand>
</feature>
<feature type="binding site" evidence="1">
    <location>
        <position position="275"/>
    </location>
    <ligand>
        <name>a 1,2-diacyl-sn-glycero-3-phospho-(1D-myo-inositol-3-phosphate)</name>
        <dbReference type="ChEBI" id="CHEBI:58088"/>
    </ligand>
</feature>
<feature type="binding site" evidence="1">
    <location>
        <begin position="335"/>
        <end position="341"/>
    </location>
    <ligand>
        <name>substrate</name>
    </ligand>
</feature>
<feature type="binding site" evidence="1">
    <location>
        <position position="336"/>
    </location>
    <ligand>
        <name>a 1,2-diacyl-sn-glycero-3-phospho-(1D-myo-inositol-3,5-bisphosphate)</name>
        <dbReference type="ChEBI" id="CHEBI:57923"/>
    </ligand>
</feature>
<feature type="binding site" evidence="1">
    <location>
        <position position="336"/>
    </location>
    <ligand>
        <name>a 1,2-diacyl-sn-glycero-3-phospho-(1D-myo-inositol-3-phosphate)</name>
        <dbReference type="ChEBI" id="CHEBI:58088"/>
    </ligand>
</feature>
<feature type="binding site" evidence="1">
    <location>
        <position position="337"/>
    </location>
    <ligand>
        <name>a 1,2-diacyl-sn-glycero-3-phospho-(1D-myo-inositol-3,5-bisphosphate)</name>
        <dbReference type="ChEBI" id="CHEBI:57923"/>
    </ligand>
</feature>
<feature type="binding site" evidence="1">
    <location>
        <position position="337"/>
    </location>
    <ligand>
        <name>a 1,2-diacyl-sn-glycero-3-phospho-(1D-myo-inositol-3-phosphate)</name>
        <dbReference type="ChEBI" id="CHEBI:58088"/>
    </ligand>
</feature>
<feature type="binding site" evidence="1">
    <location>
        <position position="338"/>
    </location>
    <ligand>
        <name>a 1,2-diacyl-sn-glycero-3-phospho-(1D-myo-inositol-3,5-bisphosphate)</name>
        <dbReference type="ChEBI" id="CHEBI:57923"/>
    </ligand>
</feature>
<feature type="binding site" evidence="1">
    <location>
        <position position="338"/>
    </location>
    <ligand>
        <name>a 1,2-diacyl-sn-glycero-3-phospho-(1D-myo-inositol-3-phosphate)</name>
        <dbReference type="ChEBI" id="CHEBI:58088"/>
    </ligand>
</feature>
<feature type="binding site" evidence="1">
    <location>
        <position position="339"/>
    </location>
    <ligand>
        <name>a 1,2-diacyl-sn-glycero-3-phospho-(1D-myo-inositol-3,5-bisphosphate)</name>
        <dbReference type="ChEBI" id="CHEBI:57923"/>
    </ligand>
</feature>
<feature type="binding site" evidence="1">
    <location>
        <position position="339"/>
    </location>
    <ligand>
        <name>a 1,2-diacyl-sn-glycero-3-phospho-(1D-myo-inositol-3-phosphate)</name>
        <dbReference type="ChEBI" id="CHEBI:58088"/>
    </ligand>
</feature>
<feature type="binding site" evidence="1">
    <location>
        <position position="340"/>
    </location>
    <ligand>
        <name>a 1,2-diacyl-sn-glycero-3-phospho-(1D-myo-inositol-3,5-bisphosphate)</name>
        <dbReference type="ChEBI" id="CHEBI:57923"/>
    </ligand>
</feature>
<feature type="binding site" evidence="1">
    <location>
        <position position="340"/>
    </location>
    <ligand>
        <name>a 1,2-diacyl-sn-glycero-3-phospho-(1D-myo-inositol-3-phosphate)</name>
        <dbReference type="ChEBI" id="CHEBI:58088"/>
    </ligand>
</feature>
<feature type="binding site" evidence="1">
    <location>
        <position position="341"/>
    </location>
    <ligand>
        <name>a 1,2-diacyl-sn-glycero-3-phospho-(1D-myo-inositol-3,5-bisphosphate)</name>
        <dbReference type="ChEBI" id="CHEBI:57923"/>
    </ligand>
</feature>
<feature type="binding site" evidence="1">
    <location>
        <position position="341"/>
    </location>
    <ligand>
        <name>a 1,2-diacyl-sn-glycero-3-phospho-(1D-myo-inositol-3-phosphate)</name>
        <dbReference type="ChEBI" id="CHEBI:58088"/>
    </ligand>
</feature>
<feature type="binding site" evidence="1">
    <location>
        <position position="377"/>
    </location>
    <ligand>
        <name>a 1,2-diacyl-sn-glycero-3-phospho-(1D-myo-inositol-3,5-bisphosphate)</name>
        <dbReference type="ChEBI" id="CHEBI:57923"/>
    </ligand>
</feature>
<feature type="binding site" evidence="1">
    <location>
        <position position="381"/>
    </location>
    <ligand>
        <name>a 1,2-diacyl-sn-glycero-3-phospho-(1D-myo-inositol-3,5-bisphosphate)</name>
        <dbReference type="ChEBI" id="CHEBI:57923"/>
    </ligand>
</feature>
<feature type="binding site" evidence="1">
    <location>
        <position position="381"/>
    </location>
    <ligand>
        <name>a 1,2-diacyl-sn-glycero-3-phospho-(1D-myo-inositol-3-phosphate)</name>
        <dbReference type="ChEBI" id="CHEBI:58088"/>
    </ligand>
</feature>
<feature type="binding site" evidence="1">
    <location>
        <position position="381"/>
    </location>
    <ligand>
        <name>substrate</name>
    </ligand>
</feature>
<feature type="splice variant" id="VSP_058287" description="In isoform c." evidence="10">
    <location>
        <begin position="104"/>
        <end position="105"/>
    </location>
</feature>
<feature type="mutagenesis site" description="Inhibits fluid uptake endocytosis in coelomocytes. Localizes in aggregates at the plasma membrane and/or to vesicles close to the plasma membrane. Abnormal anterior migration of QL neuroblast descendants. Reduction in the number of synapses formed in DA9 neurons." evidence="7 8 9">
    <original>C</original>
    <variation>S</variation>
    <location>
        <position position="335"/>
    </location>
</feature>
<feature type="mutagenesis site" description="In ar515; in 25 percent of mutants, abnormal anterior migration of QL neuroblast descendants." evidence="8">
    <original>D</original>
    <variation>N</variation>
    <location>
        <position position="340"/>
    </location>
</feature>
<sequence>MRFEDIGISKVDKVCLVDRLGCQENLVGTVHVTTTHIIFRAENGSKELWLATGLISSVEKGTLTAAGCMLVIRCKHFQVITLLISRDKSCQDLYETLQRAAKPVSVNVTELLAFENREPVEDVRGWRRLDWNSEMTRQGITKSQWTESNINEGYTICDTYPNKLWFPTAASTSVLLGSCKFRSRGRLPVLTYFHQQTEAALCRCAQPLTGFSARCVEDEKLMELVGKANTNSDNLFLVDTRPRVNAMVNKVQGKGFEDERNYSNMRFHFFDIENIHVMRASQARLLDAVTKCRDVTEYWKTLEASGWLKHVRSVVECSLFLAESISRGTSCVVHCSDGWDRTSQVVALCQLLLDPYYRTIHGFQVLIEKDWLGFGHKFDDRCGHVGALNDEAGKEVSPIFTQWLDCIWQIMQQKPRAFQFNERYLIEMHEHVYSCQFGTFIGNCDKDRRDLNLSKRTKSLWTWMDARHDDYMNPFYSPTAHVALLDLDTRAARFTVWTAMYNRFDNGLQPRERLEDLTMAAMEHVGVLESHVAQLRTRLAELKTQQNQQITSTNTPTNMVDSGMSSATDDLKNLSLSHPLDPLSSTLPILERATSQESGVMDSSLYYPDEALTKYSLKWQPLRGADRCSNPACRGEFSSTIERRIHCHLCGMIFCRRCLKVSADERERVCDKCKTD</sequence>
<reference evidence="12" key="1">
    <citation type="journal article" date="2004" name="Mol. Biol. Cell">
        <title>Disease-related myotubularins function in endocytic traffic in Caenorhabditis elegans.</title>
        <authorList>
            <person name="Dang H."/>
            <person name="Li Z."/>
            <person name="Skolnik E.Y."/>
            <person name="Fares H."/>
        </authorList>
    </citation>
    <scope>NUCLEOTIDE SEQUENCE [MRNA] (ISOFORM A)</scope>
    <scope>FUNCTION</scope>
    <scope>INTERACTION WITH MTM-9</scope>
    <scope>SUBCELLULAR LOCATION</scope>
    <scope>DOMAIN</scope>
    <scope>MUTAGENESIS OF CYS-335</scope>
</reference>
<reference evidence="13" key="2">
    <citation type="journal article" date="1998" name="Science">
        <title>Genome sequence of the nematode C. elegans: a platform for investigating biology.</title>
        <authorList>
            <consortium name="The C. elegans sequencing consortium"/>
        </authorList>
    </citation>
    <scope>NUCLEOTIDE SEQUENCE [LARGE SCALE GENOMIC DNA]</scope>
    <source>
        <strain evidence="13">Bristol N2</strain>
    </source>
</reference>
<reference evidence="10" key="3">
    <citation type="journal article" date="2003" name="J. Biol. Chem.">
        <title>Genetic analysis of the myotubularin family of phosphatases in Caenorhabditis elegans.</title>
        <authorList>
            <person name="Xue Y."/>
            <person name="Fares H."/>
            <person name="Grant B."/>
            <person name="Li Z."/>
            <person name="Rose A.M."/>
            <person name="Clark S.G."/>
            <person name="Skolnik E.Y."/>
        </authorList>
    </citation>
    <scope>FUNCTION</scope>
    <scope>SUBCELLULAR LOCATION</scope>
    <scope>TISSUE SPECIFICITY</scope>
    <scope>DOMAIN</scope>
    <scope>DISRUPTION PHENOTYPE</scope>
</reference>
<reference evidence="10" key="4">
    <citation type="journal article" date="2010" name="EMBO J.">
        <title>Wnt signalling requires MTM-6 and MTM-9 myotubularin lipid-phosphatase function in Wnt-producing cells.</title>
        <authorList>
            <person name="Silhankova M."/>
            <person name="Port F."/>
            <person name="Harterink M."/>
            <person name="Basler K."/>
            <person name="Korswagen H.C."/>
        </authorList>
    </citation>
    <scope>FUNCTION</scope>
    <scope>MUTAGENESIS OF CYS-335 AND ASP-340</scope>
</reference>
<reference evidence="10" key="5">
    <citation type="journal article" date="2014" name="PLoS ONE">
        <title>MTM-6, a phosphoinositide phosphatase, is required to promote synapse formation in Caenorhabditis elegans.</title>
        <authorList>
            <person name="Ericson V.R."/>
            <person name="Spilker K.A."/>
            <person name="Tugizova M.S."/>
            <person name="Shen K."/>
        </authorList>
    </citation>
    <scope>FUNCTION</scope>
    <scope>TISSUE SPECIFICITY</scope>
    <scope>MUTAGENESIS OF CYS-335</scope>
</reference>
<protein>
    <recommendedName>
        <fullName evidence="11">Phosphatidylinositol-3,5-bisphosphate 3-phosphatase MTMR6</fullName>
        <ecNumber evidence="11">3.1.3.95</ecNumber>
    </recommendedName>
    <alternativeName>
        <fullName evidence="2">Myotubularin-related protein 6</fullName>
    </alternativeName>
    <alternativeName>
        <fullName evidence="10">Phosphatidylinositol-3-phosphate phosphatase</fullName>
    </alternativeName>
</protein>
<organism evidence="13">
    <name type="scientific">Caenorhabditis elegans</name>
    <dbReference type="NCBI Taxonomy" id="6239"/>
    <lineage>
        <taxon>Eukaryota</taxon>
        <taxon>Metazoa</taxon>
        <taxon>Ecdysozoa</taxon>
        <taxon>Nematoda</taxon>
        <taxon>Chromadorea</taxon>
        <taxon>Rhabditida</taxon>
        <taxon>Rhabditina</taxon>
        <taxon>Rhabditomorpha</taxon>
        <taxon>Rhabditoidea</taxon>
        <taxon>Rhabditidae</taxon>
        <taxon>Peloderinae</taxon>
        <taxon>Caenorhabditis</taxon>
    </lineage>
</organism>
<gene>
    <name evidence="14" type="primary">mtm-6</name>
    <name evidence="14" type="synonym">cup-6</name>
    <name evidence="14" type="ORF">F53A2.8</name>
</gene>
<name>MTMR6_CAEEL</name>
<proteinExistence type="evidence at protein level"/>
<dbReference type="EC" id="3.1.3.95" evidence="11"/>
<dbReference type="EMBL" id="AY313177">
    <property type="protein sequence ID" value="AAP79302.1"/>
    <property type="molecule type" value="mRNA"/>
</dbReference>
<dbReference type="EMBL" id="BX284603">
    <property type="protein sequence ID" value="CAB04456.1"/>
    <property type="molecule type" value="Genomic_DNA"/>
</dbReference>
<dbReference type="EMBL" id="BX284603">
    <property type="protein sequence ID" value="CAH10812.1"/>
    <property type="molecule type" value="Genomic_DNA"/>
</dbReference>
<dbReference type="PIR" id="T22532">
    <property type="entry name" value="T22532"/>
</dbReference>
<dbReference type="RefSeq" id="NP_001022602.1">
    <molecule id="G5ED68-2"/>
    <property type="nucleotide sequence ID" value="NM_001027431.7"/>
</dbReference>
<dbReference type="RefSeq" id="NP_499753.1">
    <molecule id="G5ED68-1"/>
    <property type="nucleotide sequence ID" value="NM_067352.7"/>
</dbReference>
<dbReference type="SMR" id="G5ED68"/>
<dbReference type="ComplexPortal" id="CPX-4024">
    <property type="entry name" value="MTM6-MTM9 myotubularin lipid phosphatase complex"/>
</dbReference>
<dbReference type="FunCoup" id="G5ED68">
    <property type="interactions" value="2511"/>
</dbReference>
<dbReference type="STRING" id="6239.F53A2.8b.2"/>
<dbReference type="PaxDb" id="6239-F53A2.8b.2"/>
<dbReference type="PeptideAtlas" id="G5ED68"/>
<dbReference type="EnsemblMetazoa" id="F53A2.8a.1">
    <molecule id="G5ED68-1"/>
    <property type="protein sequence ID" value="F53A2.8a.1"/>
    <property type="gene ID" value="WBGene00003478"/>
</dbReference>
<dbReference type="EnsemblMetazoa" id="F53A2.8c.1">
    <molecule id="G5ED68-2"/>
    <property type="protein sequence ID" value="F53A2.8c.1"/>
    <property type="gene ID" value="WBGene00003478"/>
</dbReference>
<dbReference type="GeneID" id="176757"/>
<dbReference type="KEGG" id="cel:CELE_F53A2.8"/>
<dbReference type="AGR" id="WB:WBGene00003478"/>
<dbReference type="CTD" id="176757"/>
<dbReference type="WormBase" id="F53A2.8a">
    <molecule id="G5ED68-1"/>
    <property type="protein sequence ID" value="CE16100"/>
    <property type="gene ID" value="WBGene00003478"/>
    <property type="gene designation" value="mtm-6"/>
</dbReference>
<dbReference type="WormBase" id="F53A2.8c">
    <molecule id="G5ED68-2"/>
    <property type="protein sequence ID" value="CE37116"/>
    <property type="gene ID" value="WBGene00003478"/>
    <property type="gene designation" value="mtm-6"/>
</dbReference>
<dbReference type="eggNOG" id="KOG1089">
    <property type="taxonomic scope" value="Eukaryota"/>
</dbReference>
<dbReference type="GeneTree" id="ENSGT00940000172348"/>
<dbReference type="InParanoid" id="G5ED68"/>
<dbReference type="OrthoDB" id="271628at2759"/>
<dbReference type="Reactome" id="R-CEL-1660499">
    <property type="pathway name" value="Synthesis of PIPs at the plasma membrane"/>
</dbReference>
<dbReference type="Reactome" id="R-CEL-1660517">
    <property type="pathway name" value="Synthesis of PIPs at the late endosome membrane"/>
</dbReference>
<dbReference type="PRO" id="PR:G5ED68"/>
<dbReference type="Proteomes" id="UP000001940">
    <property type="component" value="Chromosome III"/>
</dbReference>
<dbReference type="Bgee" id="WBGene00003478">
    <property type="expression patterns" value="Expressed in germ line (C elegans) and 4 other cell types or tissues"/>
</dbReference>
<dbReference type="ExpressionAtlas" id="G5ED68">
    <property type="expression patterns" value="baseline and differential"/>
</dbReference>
<dbReference type="GO" id="GO:0016324">
    <property type="term" value="C:apical plasma membrane"/>
    <property type="evidence" value="ECO:0000314"/>
    <property type="project" value="WormBase"/>
</dbReference>
<dbReference type="GO" id="GO:0005737">
    <property type="term" value="C:cytoplasm"/>
    <property type="evidence" value="ECO:0000318"/>
    <property type="project" value="GO_Central"/>
</dbReference>
<dbReference type="GO" id="GO:0005829">
    <property type="term" value="C:cytosol"/>
    <property type="evidence" value="ECO:0000314"/>
    <property type="project" value="WormBase"/>
</dbReference>
<dbReference type="GO" id="GO:1904144">
    <property type="term" value="C:phosphatidylinositol phosphate phosphatase complex"/>
    <property type="evidence" value="ECO:0000303"/>
    <property type="project" value="ComplexPortal"/>
</dbReference>
<dbReference type="GO" id="GO:0005886">
    <property type="term" value="C:plasma membrane"/>
    <property type="evidence" value="ECO:0000314"/>
    <property type="project" value="WormBase"/>
</dbReference>
<dbReference type="GO" id="GO:0019902">
    <property type="term" value="F:phosphatase binding"/>
    <property type="evidence" value="ECO:0000353"/>
    <property type="project" value="WormBase"/>
</dbReference>
<dbReference type="GO" id="GO:0052629">
    <property type="term" value="F:phosphatidylinositol-3,5-bisphosphate 3-phosphatase activity"/>
    <property type="evidence" value="ECO:0007669"/>
    <property type="project" value="RHEA"/>
</dbReference>
<dbReference type="GO" id="GO:0106018">
    <property type="term" value="F:phosphatidylinositol-3,5-bisphosphate phosphatase activity"/>
    <property type="evidence" value="ECO:0000318"/>
    <property type="project" value="GO_Central"/>
</dbReference>
<dbReference type="GO" id="GO:0004438">
    <property type="term" value="F:phosphatidylinositol-3-phosphate phosphatase activity"/>
    <property type="evidence" value="ECO:0000318"/>
    <property type="project" value="GO_Central"/>
</dbReference>
<dbReference type="GO" id="GO:0008270">
    <property type="term" value="F:zinc ion binding"/>
    <property type="evidence" value="ECO:0007669"/>
    <property type="project" value="UniProtKB-KW"/>
</dbReference>
<dbReference type="GO" id="GO:0006897">
    <property type="term" value="P:endocytosis"/>
    <property type="evidence" value="ECO:0000315"/>
    <property type="project" value="WormBase"/>
</dbReference>
<dbReference type="GO" id="GO:0002119">
    <property type="term" value="P:nematode larval development"/>
    <property type="evidence" value="ECO:0000316"/>
    <property type="project" value="WormBase"/>
</dbReference>
<dbReference type="GO" id="GO:0046856">
    <property type="term" value="P:phosphatidylinositol dephosphorylation"/>
    <property type="evidence" value="ECO:0000318"/>
    <property type="project" value="GO_Central"/>
</dbReference>
<dbReference type="GO" id="GO:0046488">
    <property type="term" value="P:phosphatidylinositol metabolic process"/>
    <property type="evidence" value="ECO:0000315"/>
    <property type="project" value="WormBase"/>
</dbReference>
<dbReference type="GO" id="GO:0030334">
    <property type="term" value="P:regulation of cell migration"/>
    <property type="evidence" value="ECO:0000315"/>
    <property type="project" value="WormBase"/>
</dbReference>
<dbReference type="GO" id="GO:0030111">
    <property type="term" value="P:regulation of Wnt signaling pathway"/>
    <property type="evidence" value="ECO:0000315"/>
    <property type="project" value="WormBase"/>
</dbReference>
<dbReference type="GO" id="GO:0007416">
    <property type="term" value="P:synapse assembly"/>
    <property type="evidence" value="ECO:0000303"/>
    <property type="project" value="ComplexPortal"/>
</dbReference>
<dbReference type="CDD" id="cd13210">
    <property type="entry name" value="PH-GRAM_MTMR6-like"/>
    <property type="match status" value="1"/>
</dbReference>
<dbReference type="CDD" id="cd14532">
    <property type="entry name" value="PTP-MTMR6-like"/>
    <property type="match status" value="1"/>
</dbReference>
<dbReference type="FunFam" id="2.30.29.30:FF:000973">
    <property type="entry name" value="Myotubularin-related protein 6"/>
    <property type="match status" value="1"/>
</dbReference>
<dbReference type="Gene3D" id="2.30.29.30">
    <property type="entry name" value="Pleckstrin-homology domain (PH domain)/Phosphotyrosine-binding domain (PTB)"/>
    <property type="match status" value="1"/>
</dbReference>
<dbReference type="Gene3D" id="3.30.40.10">
    <property type="entry name" value="Zinc/RING finger domain, C3HC4 (zinc finger)"/>
    <property type="match status" value="1"/>
</dbReference>
<dbReference type="InterPro" id="IPR030564">
    <property type="entry name" value="Myotubularin"/>
</dbReference>
<dbReference type="InterPro" id="IPR010569">
    <property type="entry name" value="Myotubularin-like_Pase_dom"/>
</dbReference>
<dbReference type="InterPro" id="IPR011993">
    <property type="entry name" value="PH-like_dom_sf"/>
</dbReference>
<dbReference type="InterPro" id="IPR029021">
    <property type="entry name" value="Prot-tyrosine_phosphatase-like"/>
</dbReference>
<dbReference type="InterPro" id="IPR016130">
    <property type="entry name" value="Tyr_Pase_AS"/>
</dbReference>
<dbReference type="InterPro" id="IPR003595">
    <property type="entry name" value="Tyr_Pase_cat"/>
</dbReference>
<dbReference type="InterPro" id="IPR000306">
    <property type="entry name" value="Znf_FYVE"/>
</dbReference>
<dbReference type="InterPro" id="IPR011011">
    <property type="entry name" value="Znf_FYVE_PHD"/>
</dbReference>
<dbReference type="InterPro" id="IPR013083">
    <property type="entry name" value="Znf_RING/FYVE/PHD"/>
</dbReference>
<dbReference type="PANTHER" id="PTHR10807">
    <property type="entry name" value="MYOTUBULARIN-RELATED"/>
    <property type="match status" value="1"/>
</dbReference>
<dbReference type="PANTHER" id="PTHR10807:SF8">
    <property type="entry name" value="PHOSPHATIDYLINOSITOL-3-PHOSPHATE PHOSPHATASE"/>
    <property type="match status" value="1"/>
</dbReference>
<dbReference type="Pfam" id="PF01363">
    <property type="entry name" value="FYVE"/>
    <property type="match status" value="1"/>
</dbReference>
<dbReference type="Pfam" id="PF06602">
    <property type="entry name" value="Myotub-related"/>
    <property type="match status" value="1"/>
</dbReference>
<dbReference type="Pfam" id="PF21098">
    <property type="entry name" value="PH-GRAM_MTMR6-like"/>
    <property type="match status" value="1"/>
</dbReference>
<dbReference type="SMART" id="SM00064">
    <property type="entry name" value="FYVE"/>
    <property type="match status" value="1"/>
</dbReference>
<dbReference type="SMART" id="SM00404">
    <property type="entry name" value="PTPc_motif"/>
    <property type="match status" value="1"/>
</dbReference>
<dbReference type="SUPFAM" id="SSF52799">
    <property type="entry name" value="(Phosphotyrosine protein) phosphatases II"/>
    <property type="match status" value="1"/>
</dbReference>
<dbReference type="SUPFAM" id="SSF57903">
    <property type="entry name" value="FYVE/PHD zinc finger"/>
    <property type="match status" value="1"/>
</dbReference>
<dbReference type="SUPFAM" id="SSF50729">
    <property type="entry name" value="PH domain-like"/>
    <property type="match status" value="1"/>
</dbReference>
<dbReference type="PROSITE" id="PS51339">
    <property type="entry name" value="PPASE_MYOTUBULARIN"/>
    <property type="match status" value="1"/>
</dbReference>
<dbReference type="PROSITE" id="PS00383">
    <property type="entry name" value="TYR_PHOSPHATASE_1"/>
    <property type="match status" value="1"/>
</dbReference>
<comment type="function">
    <text evidence="6 7 8 9">Probable lipid phosphatase that specifically dephosphorylates the D-3 position of phosphatidylinositol 3-phosphate and phosphatidylinositol 3,5-bisphosphate, generating phosphatidylinositol and phosphatidylinositol 5-phosphate (PubMed:12788949, PubMed:14565969). In association with mtm-9, plays a role in endosome trafficking probably by regulating phosphatidylinositol-3-phosphate levels (PubMed:14565969, PubMed:21076391). Regulates fluid phase endocytosis in coelomocytes (PubMed:14565969). Controls the endosomal localization of sorting nexin snx-3 and the levels of sorting receptor mig-14 (PubMed:21076391). By regulating the retrograde transport of mig-14, may be involved in the secretion of Wnt ligands such as egl-20 (PubMed:21076391). Regulates posterior migration of QL neuroblast descendants and the anterior migration of QR neuroblast descendants and HSN neurons during larval development (PubMed:21076391). Involved in the formation of correct synapse number in DA9 motor neurons probably in part by regulating the secretion of Wnt ligand egl-20 (PubMed:25479419).</text>
</comment>
<comment type="catalytic activity">
    <reaction evidence="2">
        <text>a 1,2-diacyl-sn-glycero-3-phospho-(1D-myo-inositol-3,5-bisphosphate) + H2O = a 1,2-diacyl-sn-glycero-3-phospho-(1D-myo-inositol-5-phosphate) + phosphate</text>
        <dbReference type="Rhea" id="RHEA:39019"/>
        <dbReference type="ChEBI" id="CHEBI:15377"/>
        <dbReference type="ChEBI" id="CHEBI:43474"/>
        <dbReference type="ChEBI" id="CHEBI:57795"/>
        <dbReference type="ChEBI" id="CHEBI:57923"/>
        <dbReference type="EC" id="3.1.3.95"/>
    </reaction>
</comment>
<comment type="catalytic activity">
    <reaction evidence="11">
        <text>a 1,2-diacyl-sn-glycero-3-phospho-(1D-myo-inositol-3-phosphate) + H2O = a 1,2-diacyl-sn-glycero-3-phospho-(1D-myo-inositol) + phosphate</text>
        <dbReference type="Rhea" id="RHEA:12316"/>
        <dbReference type="ChEBI" id="CHEBI:15377"/>
        <dbReference type="ChEBI" id="CHEBI:43474"/>
        <dbReference type="ChEBI" id="CHEBI:57880"/>
        <dbReference type="ChEBI" id="CHEBI:58088"/>
    </reaction>
</comment>
<comment type="catalytic activity">
    <reaction evidence="2">
        <text>1,2-dioctanoyl-sn-glycero-3-phospho-(1D-myo-inositol-3,5-bisphosphate) + H2O = 1,2-dioctanoyl-sn-glycero-3-phospho-(1D-myo-inositol-5-phosphate) + phosphate</text>
        <dbReference type="Rhea" id="RHEA:45632"/>
        <dbReference type="ChEBI" id="CHEBI:15377"/>
        <dbReference type="ChEBI" id="CHEBI:43474"/>
        <dbReference type="ChEBI" id="CHEBI:78911"/>
        <dbReference type="ChEBI" id="CHEBI:85342"/>
    </reaction>
</comment>
<comment type="catalytic activity">
    <reaction evidence="2">
        <text>1,2-dioctanoyl-sn-glycero-3-phospho-(1-D-myo-inositol-3-phosphate) + H2O = 1,2-dioctanoyl-sn-glycero-3-phospho-(1D-myo-inositol) + phosphate</text>
        <dbReference type="Rhea" id="RHEA:42328"/>
        <dbReference type="ChEBI" id="CHEBI:15377"/>
        <dbReference type="ChEBI" id="CHEBI:43474"/>
        <dbReference type="ChEBI" id="CHEBI:65221"/>
        <dbReference type="ChEBI" id="CHEBI:78934"/>
    </reaction>
</comment>
<comment type="subunit">
    <text evidence="7">Heterodimer with mtm-9.</text>
</comment>
<comment type="subcellular location">
    <subcellularLocation>
        <location evidence="7">Cytoplasm</location>
    </subcellularLocation>
    <subcellularLocation>
        <location evidence="7">Membrane</location>
        <topology evidence="7">Peripheral membrane protein</topology>
    </subcellularLocation>
    <subcellularLocation>
        <location evidence="6">Apical cell membrane</location>
        <topology evidence="6">Peripheral membrane protein</topology>
    </subcellularLocation>
</comment>
<comment type="alternative products">
    <event type="alternative splicing"/>
    <isoform>
        <id>G5ED68-1</id>
        <name evidence="14">a</name>
        <sequence type="displayed"/>
    </isoform>
    <isoform>
        <id>G5ED68-2</id>
        <name evidence="15">c</name>
        <sequence type="described" ref="VSP_058287"/>
    </isoform>
</comment>
<comment type="tissue specificity">
    <text evidence="6 9">Expressed in intestinal cells (PubMed:12788949). Expressed in head neurons, pre-anal ganglion, hypodermal cells, anal depressor muscle and non-neuronal cells in the tail (PubMed:25479419).</text>
</comment>
<comment type="domain">
    <text evidence="6 7">The FYVE domain appears to be dispensable for membrane targeting and activity but may be important to increase avidity to membrane.</text>
</comment>
<comment type="disruption phenotype">
    <text evidence="6">RNAi-mediated knockdown causes an increase in phosphatidylinositol-3-phosphate at the apical plasma membrane of intestinal cells.</text>
</comment>
<comment type="similarity">
    <text evidence="10">Belongs to the protein-tyrosine phosphatase family. Non-receptor class myotubularin subfamily.</text>
</comment>
<keyword id="KW-0025">Alternative splicing</keyword>
<keyword id="KW-1003">Cell membrane</keyword>
<keyword id="KW-0963">Cytoplasm</keyword>
<keyword id="KW-0254">Endocytosis</keyword>
<keyword id="KW-0378">Hydrolase</keyword>
<keyword id="KW-0443">Lipid metabolism</keyword>
<keyword id="KW-0472">Membrane</keyword>
<keyword id="KW-0479">Metal-binding</keyword>
<keyword id="KW-1185">Reference proteome</keyword>
<keyword id="KW-0862">Zinc</keyword>
<keyword id="KW-0863">Zinc-finger</keyword>
<evidence type="ECO:0000250" key="1">
    <source>
        <dbReference type="UniProtKB" id="Q13614"/>
    </source>
</evidence>
<evidence type="ECO:0000250" key="2">
    <source>
        <dbReference type="UniProtKB" id="Q9Y217"/>
    </source>
</evidence>
<evidence type="ECO:0000255" key="3"/>
<evidence type="ECO:0000255" key="4">
    <source>
        <dbReference type="PROSITE-ProRule" id="PRU00669"/>
    </source>
</evidence>
<evidence type="ECO:0000255" key="5">
    <source>
        <dbReference type="PROSITE-ProRule" id="PRU10044"/>
    </source>
</evidence>
<evidence type="ECO:0000269" key="6">
    <source>
    </source>
</evidence>
<evidence type="ECO:0000269" key="7">
    <source>
    </source>
</evidence>
<evidence type="ECO:0000269" key="8">
    <source>
    </source>
</evidence>
<evidence type="ECO:0000269" key="9">
    <source>
    </source>
</evidence>
<evidence type="ECO:0000305" key="10"/>
<evidence type="ECO:0000305" key="11">
    <source>
    </source>
</evidence>
<evidence type="ECO:0000312" key="12">
    <source>
        <dbReference type="EMBL" id="AAP79302.1"/>
    </source>
</evidence>
<evidence type="ECO:0000312" key="13">
    <source>
        <dbReference type="Proteomes" id="UP000001940"/>
    </source>
</evidence>
<evidence type="ECO:0000312" key="14">
    <source>
        <dbReference type="WormBase" id="F53A2.8a"/>
    </source>
</evidence>
<evidence type="ECO:0000312" key="15">
    <source>
        <dbReference type="WormBase" id="F53A2.8c"/>
    </source>
</evidence>